<protein>
    <recommendedName>
        <fullName evidence="8">Neutral ceramidase 1</fullName>
        <shortName evidence="8">AtNCER1</shortName>
        <shortName evidence="8">N-CDase 1</shortName>
        <shortName evidence="8">NCDase 1</shortName>
        <ecNumber evidence="1">3.5.1.23</ecNumber>
    </recommendedName>
    <alternativeName>
        <fullName>Acylsphingosine deacylase 1</fullName>
    </alternativeName>
    <alternativeName>
        <fullName>N-acylsphingosine amidohydrolase 1</fullName>
    </alternativeName>
</protein>
<sequence>MELSLVRLWNTCFPSFFYISTVLFLLTGGGVYSHSEYLIGLGSYDITGPAADVNMMGYANMEQVASGIHFRLRARTFIVSEPQGKRVVFVNLDACMASQIVKLKVIERLKARYGDLYTEQNVGISGIHTHAGPGGYLQYVVYIVTSLGFVRQSFDALVDGIENSIIQAHENLRPGSIFLNNGELLDAGVNRSPSAYLNNPSKERSKHKYNVDKEMTLLKFVDDQWGPVGSFNWFATHGTSMSRTNSLISGDNKGAASRFMEDWYEQNTAERSYSEEFISDEIPRRVSSLIENHQDSHHELLELASYFESQPGKPVTRISSSARRVRSALRKADKPGFVSAFCQTNCGDVSPNVLGAFCLDTGLPCDFNHSTCGGKNEMCYGRGPGYPDEFESTRIIGERQFKMALELFNKASEQLQGKVDYRHVYVDFSQLNVTLPKKDGKSEVVKTCPAAMGFAFAAGTTDGPGAFDFTQGDDKGNPFWRLVRNVLKTPDKKQIDCHYPKPILLDTGEMTKPYDWAPSILSLQVLRIGQLFILSVPGEFTTMAGRRLRYAVKTQLKNSGNKDLSGEIHVVIAGLANGYSQYVTTFEEYQVQRYEGASTLYGPHTLSGYIQEFKKLSKSLVLDMPVQPGPQPPDLLDKQLSFLTPVMMDTTPSGDSFGDVISDVPKNLSLKRGNGQVTVVFRSACPRNDLLTEGTFTLVERLEQKDKTWTPVYDDDDLCLRFKWSRHKKLSSRSQATVEWRIPESASPGVYRITHFGAAKKLFGSVHHFTGSSSAFVVT</sequence>
<comment type="function">
    <text evidence="7">Hydrolyzes the sphingolipid ceramide into sphingosine and free fatty acid. Regulates sphingolipid homeostasis. Promotes oxidative stress resistance.</text>
</comment>
<comment type="catalytic activity">
    <reaction evidence="1">
        <text>an N-acylsphing-4-enine + H2O = sphing-4-enine + a fatty acid</text>
        <dbReference type="Rhea" id="RHEA:20856"/>
        <dbReference type="ChEBI" id="CHEBI:15377"/>
        <dbReference type="ChEBI" id="CHEBI:28868"/>
        <dbReference type="ChEBI" id="CHEBI:52639"/>
        <dbReference type="ChEBI" id="CHEBI:57756"/>
        <dbReference type="EC" id="3.5.1.23"/>
    </reaction>
</comment>
<comment type="subcellular location">
    <subcellularLocation>
        <location evidence="4">Secreted</location>
    </subcellularLocation>
    <subcellularLocation>
        <location evidence="7">Endoplasmic reticulum</location>
    </subcellularLocation>
    <subcellularLocation>
        <location evidence="2">Golgi apparatus</location>
    </subcellularLocation>
</comment>
<comment type="alternative products">
    <event type="alternative splicing"/>
    <isoform>
        <id>F4HQM3-1</id>
        <name>1</name>
        <sequence type="displayed"/>
    </isoform>
    <text evidence="10">Additional isoforms seem to exist.</text>
</comment>
<comment type="tissue specificity">
    <text evidence="7">Mostly expressed in stems, leaves, roots and siliques, and, to a lower extent, in flowers.</text>
</comment>
<comment type="disruption phenotype">
    <text evidence="7">Increased accumulation of hydroxyceramides. Enhanced sensitivity to oxidative stress induced by methyl viologen. Increased sensitivity to C2-ceramide induced cell death.</text>
</comment>
<comment type="similarity">
    <text evidence="9">Belongs to the neutral ceramidase family.</text>
</comment>
<comment type="sequence caution" evidence="9">
    <conflict type="erroneous gene model prediction">
        <sequence resource="EMBL-CDS" id="AAF79556"/>
    </conflict>
</comment>
<organism>
    <name type="scientific">Arabidopsis thaliana</name>
    <name type="common">Mouse-ear cress</name>
    <dbReference type="NCBI Taxonomy" id="3702"/>
    <lineage>
        <taxon>Eukaryota</taxon>
        <taxon>Viridiplantae</taxon>
        <taxon>Streptophyta</taxon>
        <taxon>Embryophyta</taxon>
        <taxon>Tracheophyta</taxon>
        <taxon>Spermatophyta</taxon>
        <taxon>Magnoliopsida</taxon>
        <taxon>eudicotyledons</taxon>
        <taxon>Gunneridae</taxon>
        <taxon>Pentapetalae</taxon>
        <taxon>rosids</taxon>
        <taxon>malvids</taxon>
        <taxon>Brassicales</taxon>
        <taxon>Brassicaceae</taxon>
        <taxon>Camelineae</taxon>
        <taxon>Arabidopsis</taxon>
    </lineage>
</organism>
<feature type="signal peptide" evidence="5">
    <location>
        <begin position="1"/>
        <end status="unknown"/>
    </location>
</feature>
<feature type="chain" id="PRO_0000439757" description="Neutral ceramidase 1">
    <location>
        <begin status="unknown"/>
        <end position="779"/>
    </location>
</feature>
<feature type="active site" description="Nucleophile" evidence="3">
    <location>
        <position position="350"/>
    </location>
</feature>
<feature type="glycosylation site" description="N-linked (GlcNAc...) asparagine" evidence="6">
    <location>
        <position position="368"/>
    </location>
</feature>
<feature type="glycosylation site" description="N-linked (GlcNAc...) asparagine" evidence="6">
    <location>
        <position position="432"/>
    </location>
</feature>
<feature type="glycosylation site" description="N-linked (GlcNAc...) asparagine" evidence="6">
    <location>
        <position position="667"/>
    </location>
</feature>
<name>NCER1_ARATH</name>
<evidence type="ECO:0000250" key="1">
    <source>
        <dbReference type="UniProtKB" id="O06769"/>
    </source>
</evidence>
<evidence type="ECO:0000250" key="2">
    <source>
        <dbReference type="UniProtKB" id="Q0JL46"/>
    </source>
</evidence>
<evidence type="ECO:0000250" key="3">
    <source>
        <dbReference type="UniProtKB" id="Q9NR71"/>
    </source>
</evidence>
<evidence type="ECO:0000250" key="4">
    <source>
        <dbReference type="UniProtKB" id="Q9VA70"/>
    </source>
</evidence>
<evidence type="ECO:0000255" key="5"/>
<evidence type="ECO:0000255" key="6">
    <source>
        <dbReference type="PROSITE-ProRule" id="PRU00498"/>
    </source>
</evidence>
<evidence type="ECO:0000269" key="7">
    <source>
    </source>
</evidence>
<evidence type="ECO:0000303" key="8">
    <source>
    </source>
</evidence>
<evidence type="ECO:0000305" key="9"/>
<evidence type="ECO:0000312" key="10">
    <source>
        <dbReference type="Araport" id="AT1G07380"/>
    </source>
</evidence>
<evidence type="ECO:0000312" key="11">
    <source>
        <dbReference type="EMBL" id="AAF79556.1"/>
    </source>
</evidence>
<accession>F4HQM3</accession>
<accession>Q9LNV7</accession>
<gene>
    <name evidence="8" type="primary">NCER1</name>
    <name evidence="10" type="ordered locus">At1g07380</name>
    <name evidence="11" type="ORF">F22G5.28</name>
</gene>
<dbReference type="EC" id="3.5.1.23" evidence="1"/>
<dbReference type="EMBL" id="AC022464">
    <property type="protein sequence ID" value="AAF79556.1"/>
    <property type="status" value="ALT_SEQ"/>
    <property type="molecule type" value="Genomic_DNA"/>
</dbReference>
<dbReference type="EMBL" id="CP002684">
    <property type="protein sequence ID" value="AEE28116.1"/>
    <property type="molecule type" value="Genomic_DNA"/>
</dbReference>
<dbReference type="PIR" id="G86208">
    <property type="entry name" value="G86208"/>
</dbReference>
<dbReference type="RefSeq" id="NP_172218.1">
    <molecule id="F4HQM3-1"/>
    <property type="nucleotide sequence ID" value="NM_100612.2"/>
</dbReference>
<dbReference type="SMR" id="F4HQM3"/>
<dbReference type="FunCoup" id="F4HQM3">
    <property type="interactions" value="815"/>
</dbReference>
<dbReference type="STRING" id="3702.F4HQM3"/>
<dbReference type="GlyCosmos" id="F4HQM3">
    <property type="glycosylation" value="3 sites, No reported glycans"/>
</dbReference>
<dbReference type="GlyGen" id="F4HQM3">
    <property type="glycosylation" value="3 sites"/>
</dbReference>
<dbReference type="PaxDb" id="3702-AT1G07380.1"/>
<dbReference type="EnsemblPlants" id="AT1G07380.1">
    <molecule id="F4HQM3-1"/>
    <property type="protein sequence ID" value="AT1G07380.1"/>
    <property type="gene ID" value="AT1G07380"/>
</dbReference>
<dbReference type="GeneID" id="837250"/>
<dbReference type="Gramene" id="AT1G07380.1">
    <molecule id="F4HQM3-1"/>
    <property type="protein sequence ID" value="AT1G07380.1"/>
    <property type="gene ID" value="AT1G07380"/>
</dbReference>
<dbReference type="KEGG" id="ath:AT1G07380"/>
<dbReference type="Araport" id="AT1G07380"/>
<dbReference type="TAIR" id="AT1G07380">
    <property type="gene designation" value="ATNCER1"/>
</dbReference>
<dbReference type="eggNOG" id="KOG2232">
    <property type="taxonomic scope" value="Eukaryota"/>
</dbReference>
<dbReference type="HOGENOM" id="CLU_011300_2_0_1"/>
<dbReference type="InParanoid" id="F4HQM3"/>
<dbReference type="OMA" id="GTTVQTC"/>
<dbReference type="BRENDA" id="3.5.1.23">
    <property type="organism ID" value="399"/>
</dbReference>
<dbReference type="PRO" id="PR:F4HQM3"/>
<dbReference type="Proteomes" id="UP000006548">
    <property type="component" value="Chromosome 1"/>
</dbReference>
<dbReference type="ExpressionAtlas" id="F4HQM3">
    <property type="expression patterns" value="baseline and differential"/>
</dbReference>
<dbReference type="GO" id="GO:0005783">
    <property type="term" value="C:endoplasmic reticulum"/>
    <property type="evidence" value="ECO:0000314"/>
    <property type="project" value="TAIR"/>
</dbReference>
<dbReference type="GO" id="GO:0005576">
    <property type="term" value="C:extracellular region"/>
    <property type="evidence" value="ECO:0007669"/>
    <property type="project" value="UniProtKB-SubCell"/>
</dbReference>
<dbReference type="GO" id="GO:0005794">
    <property type="term" value="C:Golgi apparatus"/>
    <property type="evidence" value="ECO:0007669"/>
    <property type="project" value="UniProtKB-SubCell"/>
</dbReference>
<dbReference type="GO" id="GO:0016020">
    <property type="term" value="C:membrane"/>
    <property type="evidence" value="ECO:0007669"/>
    <property type="project" value="GOC"/>
</dbReference>
<dbReference type="GO" id="GO:0000325">
    <property type="term" value="C:plant-type vacuole"/>
    <property type="evidence" value="ECO:0007005"/>
    <property type="project" value="TAIR"/>
</dbReference>
<dbReference type="GO" id="GO:0017040">
    <property type="term" value="F:N-acylsphingosine amidohydrolase activity"/>
    <property type="evidence" value="ECO:0007669"/>
    <property type="project" value="UniProtKB-EC"/>
</dbReference>
<dbReference type="GO" id="GO:0034599">
    <property type="term" value="P:cellular response to oxidative stress"/>
    <property type="evidence" value="ECO:0000315"/>
    <property type="project" value="TAIR"/>
</dbReference>
<dbReference type="GO" id="GO:0046514">
    <property type="term" value="P:ceramide catabolic process"/>
    <property type="evidence" value="ECO:0007669"/>
    <property type="project" value="InterPro"/>
</dbReference>
<dbReference type="GO" id="GO:0090156">
    <property type="term" value="P:intracellular sphingolipid homeostasis"/>
    <property type="evidence" value="ECO:0000315"/>
    <property type="project" value="TAIR"/>
</dbReference>
<dbReference type="FunFam" id="2.60.40.2300:FF:000002">
    <property type="entry name" value="Neutral/alkaline non-lysosomal ceramidase"/>
    <property type="match status" value="1"/>
</dbReference>
<dbReference type="Gene3D" id="2.60.40.2300">
    <property type="entry name" value="Neutral/alkaline non-lysosomal ceramidase, C-terminal domain"/>
    <property type="match status" value="1"/>
</dbReference>
<dbReference type="InterPro" id="IPR006823">
    <property type="entry name" value="Ceramidase_alk"/>
</dbReference>
<dbReference type="InterPro" id="IPR038445">
    <property type="entry name" value="NCDase_C_sf"/>
</dbReference>
<dbReference type="InterPro" id="IPR031331">
    <property type="entry name" value="NEUT/ALK_ceramidase_C"/>
</dbReference>
<dbReference type="InterPro" id="IPR031329">
    <property type="entry name" value="NEUT/ALK_ceramidase_N"/>
</dbReference>
<dbReference type="PANTHER" id="PTHR12670">
    <property type="entry name" value="CERAMIDASE"/>
    <property type="match status" value="1"/>
</dbReference>
<dbReference type="PANTHER" id="PTHR12670:SF1">
    <property type="entry name" value="NEUTRAL CERAMIDASE"/>
    <property type="match status" value="1"/>
</dbReference>
<dbReference type="Pfam" id="PF04734">
    <property type="entry name" value="Ceramidase_alk"/>
    <property type="match status" value="1"/>
</dbReference>
<dbReference type="Pfam" id="PF17048">
    <property type="entry name" value="Ceramidse_alk_C"/>
    <property type="match status" value="1"/>
</dbReference>
<keyword id="KW-0025">Alternative splicing</keyword>
<keyword id="KW-0256">Endoplasmic reticulum</keyword>
<keyword id="KW-0325">Glycoprotein</keyword>
<keyword id="KW-0333">Golgi apparatus</keyword>
<keyword id="KW-0378">Hydrolase</keyword>
<keyword id="KW-0443">Lipid metabolism</keyword>
<keyword id="KW-1185">Reference proteome</keyword>
<keyword id="KW-0964">Secreted</keyword>
<keyword id="KW-0732">Signal</keyword>
<keyword id="KW-0746">Sphingolipid metabolism</keyword>
<proteinExistence type="evidence at transcript level"/>
<reference key="1">
    <citation type="journal article" date="2000" name="Nature">
        <title>Sequence and analysis of chromosome 1 of the plant Arabidopsis thaliana.</title>
        <authorList>
            <person name="Theologis A."/>
            <person name="Ecker J.R."/>
            <person name="Palm C.J."/>
            <person name="Federspiel N.A."/>
            <person name="Kaul S."/>
            <person name="White O."/>
            <person name="Alonso J."/>
            <person name="Altafi H."/>
            <person name="Araujo R."/>
            <person name="Bowman C.L."/>
            <person name="Brooks S.Y."/>
            <person name="Buehler E."/>
            <person name="Chan A."/>
            <person name="Chao Q."/>
            <person name="Chen H."/>
            <person name="Cheuk R.F."/>
            <person name="Chin C.W."/>
            <person name="Chung M.K."/>
            <person name="Conn L."/>
            <person name="Conway A.B."/>
            <person name="Conway A.R."/>
            <person name="Creasy T.H."/>
            <person name="Dewar K."/>
            <person name="Dunn P."/>
            <person name="Etgu P."/>
            <person name="Feldblyum T.V."/>
            <person name="Feng J.-D."/>
            <person name="Fong B."/>
            <person name="Fujii C.Y."/>
            <person name="Gill J.E."/>
            <person name="Goldsmith A.D."/>
            <person name="Haas B."/>
            <person name="Hansen N.F."/>
            <person name="Hughes B."/>
            <person name="Huizar L."/>
            <person name="Hunter J.L."/>
            <person name="Jenkins J."/>
            <person name="Johnson-Hopson C."/>
            <person name="Khan S."/>
            <person name="Khaykin E."/>
            <person name="Kim C.J."/>
            <person name="Koo H.L."/>
            <person name="Kremenetskaia I."/>
            <person name="Kurtz D.B."/>
            <person name="Kwan A."/>
            <person name="Lam B."/>
            <person name="Langin-Hooper S."/>
            <person name="Lee A."/>
            <person name="Lee J.M."/>
            <person name="Lenz C.A."/>
            <person name="Li J.H."/>
            <person name="Li Y.-P."/>
            <person name="Lin X."/>
            <person name="Liu S.X."/>
            <person name="Liu Z.A."/>
            <person name="Luros J.S."/>
            <person name="Maiti R."/>
            <person name="Marziali A."/>
            <person name="Militscher J."/>
            <person name="Miranda M."/>
            <person name="Nguyen M."/>
            <person name="Nierman W.C."/>
            <person name="Osborne B.I."/>
            <person name="Pai G."/>
            <person name="Peterson J."/>
            <person name="Pham P.K."/>
            <person name="Rizzo M."/>
            <person name="Rooney T."/>
            <person name="Rowley D."/>
            <person name="Sakano H."/>
            <person name="Salzberg S.L."/>
            <person name="Schwartz J.R."/>
            <person name="Shinn P."/>
            <person name="Southwick A.M."/>
            <person name="Sun H."/>
            <person name="Tallon L.J."/>
            <person name="Tambunga G."/>
            <person name="Toriumi M.J."/>
            <person name="Town C.D."/>
            <person name="Utterback T."/>
            <person name="Van Aken S."/>
            <person name="Vaysberg M."/>
            <person name="Vysotskaia V.S."/>
            <person name="Walker M."/>
            <person name="Wu D."/>
            <person name="Yu G."/>
            <person name="Fraser C.M."/>
            <person name="Venter J.C."/>
            <person name="Davis R.W."/>
        </authorList>
    </citation>
    <scope>NUCLEOTIDE SEQUENCE [LARGE SCALE GENOMIC DNA]</scope>
    <source>
        <strain>cv. Columbia</strain>
    </source>
</reference>
<reference key="2">
    <citation type="journal article" date="2017" name="Plant J.">
        <title>Araport11: a complete reannotation of the Arabidopsis thaliana reference genome.</title>
        <authorList>
            <person name="Cheng C.Y."/>
            <person name="Krishnakumar V."/>
            <person name="Chan A.P."/>
            <person name="Thibaud-Nissen F."/>
            <person name="Schobel S."/>
            <person name="Town C.D."/>
        </authorList>
    </citation>
    <scope>GENOME REANNOTATION</scope>
    <source>
        <strain>cv. Columbia</strain>
    </source>
</reference>
<reference key="3">
    <citation type="journal article" date="2015" name="Front. Plant Sci.">
        <title>An Arabidopsis neutral ceramidase mutant ncer1 accumulates hydroxyceramides and is sensitive to oxidative stress.</title>
        <authorList>
            <person name="Li J."/>
            <person name="Bi F.-C."/>
            <person name="Yin J."/>
            <person name="Wu J.-X."/>
            <person name="Rong C."/>
            <person name="Wu J.-L."/>
            <person name="Yao N."/>
        </authorList>
    </citation>
    <scope>FUNCTION</scope>
    <scope>DISRUPTION PHENOTYPE</scope>
    <scope>SUBCELLULAR LOCATION</scope>
    <scope>TISSUE SPECIFICITY</scope>
    <scope>GENE FAMILY</scope>
    <scope>NOMENCLATURE</scope>
    <source>
        <strain>cv. Columbia</strain>
    </source>
</reference>